<sequence>MKEKTPTPMKNIRNFSIIAHIDHGKSTLADCLIAECNAISNREMKSQVMDTMDIEKERGITIKAQSVRLNYTFKGEDYVLNLIDTPGHVDFSYEVSRSLCSCEGALLVVDATQGVEAQTIANTYIALDNNLEILPVINKIDLPNANVLEVKQDIEDTIGIDWFNANEVSAKAKLGIKDLLEKIITTIPAPSGDPNNPLKALIYDSWFDNYLGALALVRIMDGSINTEQEILVMGTGKKHGVLGLYYPNPLKKIPTKSLECGEIGIVSLGLKSVTDIAVGDTLTDAENPTSKPIEGFMPAKPFVFAGLYPIETDRFEDLREALLKLQLNDCALNFEPESSVALGFGFRVGFLGLLHMEVIKERLEREFSLNLIATAPTVVYEVHLTDNSIKYVQNPSELPPENHIACIKEPFVRATIITPSEFLGNLMQLLNNKRGIQEKMEYLNQSRVMLTYSLPSNEIVMDFYDKLKSCTKGYASFDYEPIENREANLVKLDVRVAGDVVDALSIIIDKNKAYEKGRALVETMKELIPRQLFEVAIQASVGNKIIARETIKSVGKNVTAKCYGGDITRKRKLLEKQKEGKKRMKAIGKVELPQEAFLAILKID</sequence>
<organism>
    <name type="scientific">Helicobacter pylori (strain J99 / ATCC 700824)</name>
    <name type="common">Campylobacter pylori J99</name>
    <dbReference type="NCBI Taxonomy" id="85963"/>
    <lineage>
        <taxon>Bacteria</taxon>
        <taxon>Pseudomonadati</taxon>
        <taxon>Campylobacterota</taxon>
        <taxon>Epsilonproteobacteria</taxon>
        <taxon>Campylobacterales</taxon>
        <taxon>Helicobacteraceae</taxon>
        <taxon>Helicobacter</taxon>
    </lineage>
</organism>
<feature type="chain" id="PRO_0000176283" description="Elongation factor 4">
    <location>
        <begin position="1"/>
        <end position="604"/>
    </location>
</feature>
<feature type="domain" description="tr-type G">
    <location>
        <begin position="10"/>
        <end position="191"/>
    </location>
</feature>
<feature type="binding site" evidence="1">
    <location>
        <begin position="22"/>
        <end position="27"/>
    </location>
    <ligand>
        <name>GTP</name>
        <dbReference type="ChEBI" id="CHEBI:37565"/>
    </ligand>
</feature>
<feature type="binding site" evidence="1">
    <location>
        <begin position="138"/>
        <end position="141"/>
    </location>
    <ligand>
        <name>GTP</name>
        <dbReference type="ChEBI" id="CHEBI:37565"/>
    </ligand>
</feature>
<proteinExistence type="inferred from homology"/>
<name>LEPA_HELPJ</name>
<reference key="1">
    <citation type="journal article" date="1999" name="Nature">
        <title>Genomic sequence comparison of two unrelated isolates of the human gastric pathogen Helicobacter pylori.</title>
        <authorList>
            <person name="Alm R.A."/>
            <person name="Ling L.-S.L."/>
            <person name="Moir D.T."/>
            <person name="King B.L."/>
            <person name="Brown E.D."/>
            <person name="Doig P.C."/>
            <person name="Smith D.R."/>
            <person name="Noonan B."/>
            <person name="Guild B.C."/>
            <person name="deJonge B.L."/>
            <person name="Carmel G."/>
            <person name="Tummino P.J."/>
            <person name="Caruso A."/>
            <person name="Uria-Nickelsen M."/>
            <person name="Mills D.M."/>
            <person name="Ives C."/>
            <person name="Gibson R."/>
            <person name="Merberg D."/>
            <person name="Mills S.D."/>
            <person name="Jiang Q."/>
            <person name="Taylor D.E."/>
            <person name="Vovis G.F."/>
            <person name="Trust T.J."/>
        </authorList>
    </citation>
    <scope>NUCLEOTIDE SEQUENCE [LARGE SCALE GENOMIC DNA]</scope>
    <source>
        <strain>J99 / ATCC 700824</strain>
    </source>
</reference>
<gene>
    <name evidence="1" type="primary">lepA</name>
    <name type="ordered locus">jhp_0329</name>
</gene>
<keyword id="KW-0997">Cell inner membrane</keyword>
<keyword id="KW-1003">Cell membrane</keyword>
<keyword id="KW-0342">GTP-binding</keyword>
<keyword id="KW-0378">Hydrolase</keyword>
<keyword id="KW-0472">Membrane</keyword>
<keyword id="KW-0547">Nucleotide-binding</keyword>
<keyword id="KW-0648">Protein biosynthesis</keyword>
<protein>
    <recommendedName>
        <fullName evidence="1">Elongation factor 4</fullName>
        <shortName evidence="1">EF-4</shortName>
        <ecNumber evidence="1">3.6.5.n1</ecNumber>
    </recommendedName>
    <alternativeName>
        <fullName evidence="1">Ribosomal back-translocase LepA</fullName>
    </alternativeName>
</protein>
<comment type="function">
    <text evidence="1">Required for accurate and efficient protein synthesis under certain stress conditions. May act as a fidelity factor of the translation reaction, by catalyzing a one-codon backward translocation of tRNAs on improperly translocated ribosomes. Back-translocation proceeds from a post-translocation (POST) complex to a pre-translocation (PRE) complex, thus giving elongation factor G a second chance to translocate the tRNAs correctly. Binds to ribosomes in a GTP-dependent manner.</text>
</comment>
<comment type="catalytic activity">
    <reaction evidence="1">
        <text>GTP + H2O = GDP + phosphate + H(+)</text>
        <dbReference type="Rhea" id="RHEA:19669"/>
        <dbReference type="ChEBI" id="CHEBI:15377"/>
        <dbReference type="ChEBI" id="CHEBI:15378"/>
        <dbReference type="ChEBI" id="CHEBI:37565"/>
        <dbReference type="ChEBI" id="CHEBI:43474"/>
        <dbReference type="ChEBI" id="CHEBI:58189"/>
        <dbReference type="EC" id="3.6.5.n1"/>
    </reaction>
</comment>
<comment type="subcellular location">
    <subcellularLocation>
        <location evidence="1">Cell inner membrane</location>
        <topology evidence="1">Peripheral membrane protein</topology>
        <orientation evidence="1">Cytoplasmic side</orientation>
    </subcellularLocation>
</comment>
<comment type="similarity">
    <text evidence="1">Belongs to the TRAFAC class translation factor GTPase superfamily. Classic translation factor GTPase family. LepA subfamily.</text>
</comment>
<dbReference type="EC" id="3.6.5.n1" evidence="1"/>
<dbReference type="EMBL" id="AE001439">
    <property type="protein sequence ID" value="AAD05903.1"/>
    <property type="molecule type" value="Genomic_DNA"/>
</dbReference>
<dbReference type="PIR" id="A71947">
    <property type="entry name" value="A71947"/>
</dbReference>
<dbReference type="SMR" id="Q9ZM93"/>
<dbReference type="KEGG" id="hpj:jhp_0329"/>
<dbReference type="eggNOG" id="COG0481">
    <property type="taxonomic scope" value="Bacteria"/>
</dbReference>
<dbReference type="Proteomes" id="UP000000804">
    <property type="component" value="Chromosome"/>
</dbReference>
<dbReference type="GO" id="GO:0005886">
    <property type="term" value="C:plasma membrane"/>
    <property type="evidence" value="ECO:0007669"/>
    <property type="project" value="UniProtKB-SubCell"/>
</dbReference>
<dbReference type="GO" id="GO:0005525">
    <property type="term" value="F:GTP binding"/>
    <property type="evidence" value="ECO:0007669"/>
    <property type="project" value="UniProtKB-UniRule"/>
</dbReference>
<dbReference type="GO" id="GO:0003924">
    <property type="term" value="F:GTPase activity"/>
    <property type="evidence" value="ECO:0007669"/>
    <property type="project" value="UniProtKB-UniRule"/>
</dbReference>
<dbReference type="GO" id="GO:0043022">
    <property type="term" value="F:ribosome binding"/>
    <property type="evidence" value="ECO:0007669"/>
    <property type="project" value="UniProtKB-UniRule"/>
</dbReference>
<dbReference type="GO" id="GO:0003746">
    <property type="term" value="F:translation elongation factor activity"/>
    <property type="evidence" value="ECO:0007669"/>
    <property type="project" value="UniProtKB-UniRule"/>
</dbReference>
<dbReference type="GO" id="GO:0045727">
    <property type="term" value="P:positive regulation of translation"/>
    <property type="evidence" value="ECO:0007669"/>
    <property type="project" value="UniProtKB-UniRule"/>
</dbReference>
<dbReference type="CDD" id="cd03699">
    <property type="entry name" value="EF4_II"/>
    <property type="match status" value="1"/>
</dbReference>
<dbReference type="CDD" id="cd16260">
    <property type="entry name" value="EF4_III"/>
    <property type="match status" value="1"/>
</dbReference>
<dbReference type="CDD" id="cd01890">
    <property type="entry name" value="LepA"/>
    <property type="match status" value="1"/>
</dbReference>
<dbReference type="CDD" id="cd03709">
    <property type="entry name" value="lepA_C"/>
    <property type="match status" value="1"/>
</dbReference>
<dbReference type="FunFam" id="3.40.50.300:FF:000078">
    <property type="entry name" value="Elongation factor 4"/>
    <property type="match status" value="1"/>
</dbReference>
<dbReference type="FunFam" id="3.30.70.240:FF:000007">
    <property type="entry name" value="Translation factor GUF1, mitochondrial"/>
    <property type="match status" value="1"/>
</dbReference>
<dbReference type="FunFam" id="3.30.70.2570:FF:000001">
    <property type="entry name" value="Translation factor GUF1, mitochondrial"/>
    <property type="match status" value="1"/>
</dbReference>
<dbReference type="FunFam" id="3.30.70.870:FF:000004">
    <property type="entry name" value="Translation factor GUF1, mitochondrial"/>
    <property type="match status" value="1"/>
</dbReference>
<dbReference type="Gene3D" id="3.30.70.240">
    <property type="match status" value="1"/>
</dbReference>
<dbReference type="Gene3D" id="3.30.70.2570">
    <property type="entry name" value="Elongation factor 4, C-terminal domain"/>
    <property type="match status" value="1"/>
</dbReference>
<dbReference type="Gene3D" id="3.30.70.870">
    <property type="entry name" value="Elongation Factor G (Translational Gtpase), domain 3"/>
    <property type="match status" value="1"/>
</dbReference>
<dbReference type="Gene3D" id="3.40.50.300">
    <property type="entry name" value="P-loop containing nucleotide triphosphate hydrolases"/>
    <property type="match status" value="1"/>
</dbReference>
<dbReference type="Gene3D" id="2.40.30.10">
    <property type="entry name" value="Translation factors"/>
    <property type="match status" value="1"/>
</dbReference>
<dbReference type="HAMAP" id="MF_00071">
    <property type="entry name" value="LepA"/>
    <property type="match status" value="1"/>
</dbReference>
<dbReference type="InterPro" id="IPR006297">
    <property type="entry name" value="EF-4"/>
</dbReference>
<dbReference type="InterPro" id="IPR035647">
    <property type="entry name" value="EFG_III/V"/>
</dbReference>
<dbReference type="InterPro" id="IPR000640">
    <property type="entry name" value="EFG_V-like"/>
</dbReference>
<dbReference type="InterPro" id="IPR004161">
    <property type="entry name" value="EFTu-like_2"/>
</dbReference>
<dbReference type="InterPro" id="IPR031157">
    <property type="entry name" value="G_TR_CS"/>
</dbReference>
<dbReference type="InterPro" id="IPR038363">
    <property type="entry name" value="LepA_C_sf"/>
</dbReference>
<dbReference type="InterPro" id="IPR013842">
    <property type="entry name" value="LepA_CTD"/>
</dbReference>
<dbReference type="InterPro" id="IPR035654">
    <property type="entry name" value="LepA_IV"/>
</dbReference>
<dbReference type="InterPro" id="IPR027417">
    <property type="entry name" value="P-loop_NTPase"/>
</dbReference>
<dbReference type="InterPro" id="IPR005225">
    <property type="entry name" value="Small_GTP-bd"/>
</dbReference>
<dbReference type="InterPro" id="IPR000795">
    <property type="entry name" value="T_Tr_GTP-bd_dom"/>
</dbReference>
<dbReference type="InterPro" id="IPR009000">
    <property type="entry name" value="Transl_B-barrel_sf"/>
</dbReference>
<dbReference type="NCBIfam" id="TIGR01393">
    <property type="entry name" value="lepA"/>
    <property type="match status" value="1"/>
</dbReference>
<dbReference type="NCBIfam" id="TIGR00231">
    <property type="entry name" value="small_GTP"/>
    <property type="match status" value="1"/>
</dbReference>
<dbReference type="PANTHER" id="PTHR43512:SF4">
    <property type="entry name" value="TRANSLATION FACTOR GUF1 HOMOLOG, CHLOROPLASTIC"/>
    <property type="match status" value="1"/>
</dbReference>
<dbReference type="PANTHER" id="PTHR43512">
    <property type="entry name" value="TRANSLATION FACTOR GUF1-RELATED"/>
    <property type="match status" value="1"/>
</dbReference>
<dbReference type="Pfam" id="PF00679">
    <property type="entry name" value="EFG_C"/>
    <property type="match status" value="1"/>
</dbReference>
<dbReference type="Pfam" id="PF00009">
    <property type="entry name" value="GTP_EFTU"/>
    <property type="match status" value="1"/>
</dbReference>
<dbReference type="Pfam" id="PF03144">
    <property type="entry name" value="GTP_EFTU_D2"/>
    <property type="match status" value="1"/>
</dbReference>
<dbReference type="Pfam" id="PF06421">
    <property type="entry name" value="LepA_C"/>
    <property type="match status" value="1"/>
</dbReference>
<dbReference type="PRINTS" id="PR00315">
    <property type="entry name" value="ELONGATNFCT"/>
</dbReference>
<dbReference type="SUPFAM" id="SSF54980">
    <property type="entry name" value="EF-G C-terminal domain-like"/>
    <property type="match status" value="2"/>
</dbReference>
<dbReference type="SUPFAM" id="SSF52540">
    <property type="entry name" value="P-loop containing nucleoside triphosphate hydrolases"/>
    <property type="match status" value="1"/>
</dbReference>
<dbReference type="SUPFAM" id="SSF50447">
    <property type="entry name" value="Translation proteins"/>
    <property type="match status" value="1"/>
</dbReference>
<dbReference type="PROSITE" id="PS00301">
    <property type="entry name" value="G_TR_1"/>
    <property type="match status" value="1"/>
</dbReference>
<dbReference type="PROSITE" id="PS51722">
    <property type="entry name" value="G_TR_2"/>
    <property type="match status" value="1"/>
</dbReference>
<evidence type="ECO:0000255" key="1">
    <source>
        <dbReference type="HAMAP-Rule" id="MF_00071"/>
    </source>
</evidence>
<accession>Q9ZM93</accession>